<evidence type="ECO:0000255" key="1">
    <source>
        <dbReference type="HAMAP-Rule" id="MF_01356"/>
    </source>
</evidence>
<protein>
    <recommendedName>
        <fullName evidence="1">NADH-quinone oxidoreductase subunit B</fullName>
        <ecNumber evidence="1">7.1.1.-</ecNumber>
    </recommendedName>
    <alternativeName>
        <fullName evidence="1">NADH dehydrogenase I subunit B</fullName>
    </alternativeName>
    <alternativeName>
        <fullName evidence="1">NDH-1 subunit B</fullName>
    </alternativeName>
</protein>
<comment type="function">
    <text evidence="1">NDH-1 shuttles electrons from NADH, via FMN and iron-sulfur (Fe-S) centers, to quinones in the respiratory chain. The immediate electron acceptor for the enzyme in this species is believed to be ubiquinone. Couples the redox reaction to proton translocation (for every two electrons transferred, four hydrogen ions are translocated across the cytoplasmic membrane), and thus conserves the redox energy in a proton gradient.</text>
</comment>
<comment type="catalytic activity">
    <reaction evidence="1">
        <text>a quinone + NADH + 5 H(+)(in) = a quinol + NAD(+) + 4 H(+)(out)</text>
        <dbReference type="Rhea" id="RHEA:57888"/>
        <dbReference type="ChEBI" id="CHEBI:15378"/>
        <dbReference type="ChEBI" id="CHEBI:24646"/>
        <dbReference type="ChEBI" id="CHEBI:57540"/>
        <dbReference type="ChEBI" id="CHEBI:57945"/>
        <dbReference type="ChEBI" id="CHEBI:132124"/>
    </reaction>
</comment>
<comment type="cofactor">
    <cofactor evidence="1">
        <name>[4Fe-4S] cluster</name>
        <dbReference type="ChEBI" id="CHEBI:49883"/>
    </cofactor>
    <text evidence="1">Binds 1 [4Fe-4S] cluster.</text>
</comment>
<comment type="subunit">
    <text evidence="1">NDH-1 is composed of 13 different subunits. Subunits NuoB, CD, E, F, and G constitute the peripheral sector of the complex.</text>
</comment>
<comment type="subcellular location">
    <subcellularLocation>
        <location evidence="1">Cell inner membrane</location>
        <topology evidence="1">Peripheral membrane protein</topology>
        <orientation evidence="1">Cytoplasmic side</orientation>
    </subcellularLocation>
</comment>
<comment type="similarity">
    <text evidence="1">Belongs to the complex I 20 kDa subunit family.</text>
</comment>
<sequence length="220" mass="25056">MDYTLTRIDPNGENDRYPLQKQEIVTDPLEQEVNKNVFMGKLNDMVNWGRKNSIWPYNFGLSCCYVEMVTSFTAVHDVARFGAEVLRASPRQADLMVVAGTCFTKMAPVIQRLYDQMLEPKWVISMGACANSGGMYDIYSVVQGVDKFIPVDVYIPGCPPRPEAYMQALMLLQESIGKERRPLSWVVGDQGVYRANMQSERERKRGERIAVTNLRTPDEI</sequence>
<dbReference type="EC" id="7.1.1.-" evidence="1"/>
<dbReference type="EMBL" id="CU928145">
    <property type="protein sequence ID" value="CAU98399.1"/>
    <property type="molecule type" value="Genomic_DNA"/>
</dbReference>
<dbReference type="RefSeq" id="WP_000386733.1">
    <property type="nucleotide sequence ID" value="NZ_CP028304.1"/>
</dbReference>
<dbReference type="SMR" id="B7LBP8"/>
<dbReference type="GeneID" id="93774887"/>
<dbReference type="KEGG" id="eck:EC55989_2531"/>
<dbReference type="HOGENOM" id="CLU_055737_7_3_6"/>
<dbReference type="Proteomes" id="UP000000746">
    <property type="component" value="Chromosome"/>
</dbReference>
<dbReference type="GO" id="GO:0005886">
    <property type="term" value="C:plasma membrane"/>
    <property type="evidence" value="ECO:0007669"/>
    <property type="project" value="UniProtKB-SubCell"/>
</dbReference>
<dbReference type="GO" id="GO:0045271">
    <property type="term" value="C:respiratory chain complex I"/>
    <property type="evidence" value="ECO:0007669"/>
    <property type="project" value="TreeGrafter"/>
</dbReference>
<dbReference type="GO" id="GO:0051539">
    <property type="term" value="F:4 iron, 4 sulfur cluster binding"/>
    <property type="evidence" value="ECO:0007669"/>
    <property type="project" value="UniProtKB-KW"/>
</dbReference>
<dbReference type="GO" id="GO:0005506">
    <property type="term" value="F:iron ion binding"/>
    <property type="evidence" value="ECO:0007669"/>
    <property type="project" value="UniProtKB-UniRule"/>
</dbReference>
<dbReference type="GO" id="GO:0008137">
    <property type="term" value="F:NADH dehydrogenase (ubiquinone) activity"/>
    <property type="evidence" value="ECO:0007669"/>
    <property type="project" value="InterPro"/>
</dbReference>
<dbReference type="GO" id="GO:0050136">
    <property type="term" value="F:NADH:ubiquinone reductase (non-electrogenic) activity"/>
    <property type="evidence" value="ECO:0007669"/>
    <property type="project" value="UniProtKB-UniRule"/>
</dbReference>
<dbReference type="GO" id="GO:0048038">
    <property type="term" value="F:quinone binding"/>
    <property type="evidence" value="ECO:0007669"/>
    <property type="project" value="UniProtKB-KW"/>
</dbReference>
<dbReference type="GO" id="GO:0009060">
    <property type="term" value="P:aerobic respiration"/>
    <property type="evidence" value="ECO:0007669"/>
    <property type="project" value="TreeGrafter"/>
</dbReference>
<dbReference type="GO" id="GO:0015990">
    <property type="term" value="P:electron transport coupled proton transport"/>
    <property type="evidence" value="ECO:0007669"/>
    <property type="project" value="TreeGrafter"/>
</dbReference>
<dbReference type="FunFam" id="3.40.50.12280:FF:000002">
    <property type="entry name" value="NADH-quinone oxidoreductase subunit B"/>
    <property type="match status" value="1"/>
</dbReference>
<dbReference type="Gene3D" id="3.40.50.12280">
    <property type="match status" value="1"/>
</dbReference>
<dbReference type="HAMAP" id="MF_01356">
    <property type="entry name" value="NDH1_NuoB"/>
    <property type="match status" value="1"/>
</dbReference>
<dbReference type="InterPro" id="IPR006137">
    <property type="entry name" value="NADH_UbQ_OxRdtase-like_20kDa"/>
</dbReference>
<dbReference type="InterPro" id="IPR006138">
    <property type="entry name" value="NADH_UQ_OxRdtase_20Kd_su"/>
</dbReference>
<dbReference type="NCBIfam" id="TIGR01957">
    <property type="entry name" value="nuoB_fam"/>
    <property type="match status" value="1"/>
</dbReference>
<dbReference type="NCBIfam" id="NF005012">
    <property type="entry name" value="PRK06411.1"/>
    <property type="match status" value="1"/>
</dbReference>
<dbReference type="PANTHER" id="PTHR11995">
    <property type="entry name" value="NADH DEHYDROGENASE"/>
    <property type="match status" value="1"/>
</dbReference>
<dbReference type="PANTHER" id="PTHR11995:SF14">
    <property type="entry name" value="NADH DEHYDROGENASE [UBIQUINONE] IRON-SULFUR PROTEIN 7, MITOCHONDRIAL"/>
    <property type="match status" value="1"/>
</dbReference>
<dbReference type="Pfam" id="PF01058">
    <property type="entry name" value="Oxidored_q6"/>
    <property type="match status" value="1"/>
</dbReference>
<dbReference type="SUPFAM" id="SSF56770">
    <property type="entry name" value="HydA/Nqo6-like"/>
    <property type="match status" value="1"/>
</dbReference>
<dbReference type="PROSITE" id="PS01150">
    <property type="entry name" value="COMPLEX1_20K"/>
    <property type="match status" value="1"/>
</dbReference>
<reference key="1">
    <citation type="journal article" date="2009" name="PLoS Genet.">
        <title>Organised genome dynamics in the Escherichia coli species results in highly diverse adaptive paths.</title>
        <authorList>
            <person name="Touchon M."/>
            <person name="Hoede C."/>
            <person name="Tenaillon O."/>
            <person name="Barbe V."/>
            <person name="Baeriswyl S."/>
            <person name="Bidet P."/>
            <person name="Bingen E."/>
            <person name="Bonacorsi S."/>
            <person name="Bouchier C."/>
            <person name="Bouvet O."/>
            <person name="Calteau A."/>
            <person name="Chiapello H."/>
            <person name="Clermont O."/>
            <person name="Cruveiller S."/>
            <person name="Danchin A."/>
            <person name="Diard M."/>
            <person name="Dossat C."/>
            <person name="Karoui M.E."/>
            <person name="Frapy E."/>
            <person name="Garry L."/>
            <person name="Ghigo J.M."/>
            <person name="Gilles A.M."/>
            <person name="Johnson J."/>
            <person name="Le Bouguenec C."/>
            <person name="Lescat M."/>
            <person name="Mangenot S."/>
            <person name="Martinez-Jehanne V."/>
            <person name="Matic I."/>
            <person name="Nassif X."/>
            <person name="Oztas S."/>
            <person name="Petit M.A."/>
            <person name="Pichon C."/>
            <person name="Rouy Z."/>
            <person name="Ruf C.S."/>
            <person name="Schneider D."/>
            <person name="Tourret J."/>
            <person name="Vacherie B."/>
            <person name="Vallenet D."/>
            <person name="Medigue C."/>
            <person name="Rocha E.P.C."/>
            <person name="Denamur E."/>
        </authorList>
    </citation>
    <scope>NUCLEOTIDE SEQUENCE [LARGE SCALE GENOMIC DNA]</scope>
    <source>
        <strain>55989 / EAEC</strain>
    </source>
</reference>
<feature type="chain" id="PRO_0000376206" description="NADH-quinone oxidoreductase subunit B">
    <location>
        <begin position="1"/>
        <end position="220"/>
    </location>
</feature>
<feature type="binding site" evidence="1">
    <location>
        <position position="63"/>
    </location>
    <ligand>
        <name>[4Fe-4S] cluster</name>
        <dbReference type="ChEBI" id="CHEBI:49883"/>
    </ligand>
</feature>
<feature type="binding site" evidence="1">
    <location>
        <position position="64"/>
    </location>
    <ligand>
        <name>[4Fe-4S] cluster</name>
        <dbReference type="ChEBI" id="CHEBI:49883"/>
    </ligand>
</feature>
<feature type="binding site" evidence="1">
    <location>
        <position position="129"/>
    </location>
    <ligand>
        <name>[4Fe-4S] cluster</name>
        <dbReference type="ChEBI" id="CHEBI:49883"/>
    </ligand>
</feature>
<feature type="binding site" evidence="1">
    <location>
        <position position="158"/>
    </location>
    <ligand>
        <name>[4Fe-4S] cluster</name>
        <dbReference type="ChEBI" id="CHEBI:49883"/>
    </ligand>
</feature>
<organism>
    <name type="scientific">Escherichia coli (strain 55989 / EAEC)</name>
    <dbReference type="NCBI Taxonomy" id="585055"/>
    <lineage>
        <taxon>Bacteria</taxon>
        <taxon>Pseudomonadati</taxon>
        <taxon>Pseudomonadota</taxon>
        <taxon>Gammaproteobacteria</taxon>
        <taxon>Enterobacterales</taxon>
        <taxon>Enterobacteriaceae</taxon>
        <taxon>Escherichia</taxon>
    </lineage>
</organism>
<accession>B7LBP8</accession>
<keyword id="KW-0004">4Fe-4S</keyword>
<keyword id="KW-0997">Cell inner membrane</keyword>
<keyword id="KW-1003">Cell membrane</keyword>
<keyword id="KW-0408">Iron</keyword>
<keyword id="KW-0411">Iron-sulfur</keyword>
<keyword id="KW-0472">Membrane</keyword>
<keyword id="KW-0479">Metal-binding</keyword>
<keyword id="KW-0520">NAD</keyword>
<keyword id="KW-0874">Quinone</keyword>
<keyword id="KW-1185">Reference proteome</keyword>
<keyword id="KW-1278">Translocase</keyword>
<keyword id="KW-0813">Transport</keyword>
<keyword id="KW-0830">Ubiquinone</keyword>
<gene>
    <name evidence="1" type="primary">nuoB</name>
    <name type="ordered locus">EC55989_2531</name>
</gene>
<name>NUOB_ECO55</name>
<proteinExistence type="inferred from homology"/>